<accession>Q32RN1</accession>
<geneLocation type="chloroplast"/>
<proteinExistence type="inferred from homology"/>
<evidence type="ECO:0000255" key="1">
    <source>
        <dbReference type="HAMAP-Rule" id="MF_00075"/>
    </source>
</evidence>
<comment type="function">
    <text evidence="1">One of the essential components for the initiation of protein synthesis. Stabilizes the binding of IF-2 and IF-3 on the 30S subunit to which N-formylmethionyl-tRNA(fMet) subsequently binds. Helps modulate mRNA selection, yielding the 30S pre-initiation complex (PIC). Upon addition of the 50S ribosomal subunit IF-1, IF-2 and IF-3 are released leaving the mature 70S translation initiation complex.</text>
</comment>
<comment type="subunit">
    <text evidence="1">Component of the 30S ribosomal translation pre-initiation complex which assembles on the 30S ribosome in the order IF-2 and IF-3, IF-1 and N-formylmethionyl-tRNA(fMet); mRNA recruitment can occur at any time during PIC assembly.</text>
</comment>
<comment type="subcellular location">
    <subcellularLocation>
        <location evidence="1">Plastid</location>
        <location evidence="1">Chloroplast</location>
    </subcellularLocation>
</comment>
<comment type="similarity">
    <text evidence="1">Belongs to the IF-1 family.</text>
</comment>
<sequence length="77" mass="8897">MKKQNLIEMEGVVTESLPNAMFRVYLDNGCEVLAHISGKIRRNYIRILLADRVKVELSPYDLTKGRITYRLRTKSNG</sequence>
<keyword id="KW-0150">Chloroplast</keyword>
<keyword id="KW-0396">Initiation factor</keyword>
<keyword id="KW-0934">Plastid</keyword>
<keyword id="KW-0648">Protein biosynthesis</keyword>
<keyword id="KW-0694">RNA-binding</keyword>
<keyword id="KW-0699">rRNA-binding</keyword>
<reference key="1">
    <citation type="journal article" date="2005" name="BMC Biol.">
        <title>The complete chloroplast DNA sequences of the charophycean green algae Staurastrum and Zygnema reveal that the chloroplast genome underwent extensive changes during the evolution of the Zygnematales.</title>
        <authorList>
            <person name="Turmel M."/>
            <person name="Otis C."/>
            <person name="Lemieux C."/>
        </authorList>
    </citation>
    <scope>NUCLEOTIDE SEQUENCE [LARGE SCALE GENOMIC DNA]</scope>
</reference>
<name>IF1C_ZYGCR</name>
<dbReference type="EMBL" id="AY958086">
    <property type="protein sequence ID" value="AAX45811.1"/>
    <property type="molecule type" value="Genomic_DNA"/>
</dbReference>
<dbReference type="RefSeq" id="YP_636495.1">
    <property type="nucleotide sequence ID" value="NC_008117.1"/>
</dbReference>
<dbReference type="SMR" id="Q32RN1"/>
<dbReference type="GeneID" id="4108131"/>
<dbReference type="GO" id="GO:0009507">
    <property type="term" value="C:chloroplast"/>
    <property type="evidence" value="ECO:0007669"/>
    <property type="project" value="UniProtKB-SubCell"/>
</dbReference>
<dbReference type="GO" id="GO:0005829">
    <property type="term" value="C:cytosol"/>
    <property type="evidence" value="ECO:0007669"/>
    <property type="project" value="TreeGrafter"/>
</dbReference>
<dbReference type="GO" id="GO:0043022">
    <property type="term" value="F:ribosome binding"/>
    <property type="evidence" value="ECO:0007669"/>
    <property type="project" value="UniProtKB-UniRule"/>
</dbReference>
<dbReference type="GO" id="GO:0019843">
    <property type="term" value="F:rRNA binding"/>
    <property type="evidence" value="ECO:0007669"/>
    <property type="project" value="UniProtKB-UniRule"/>
</dbReference>
<dbReference type="GO" id="GO:0003743">
    <property type="term" value="F:translation initiation factor activity"/>
    <property type="evidence" value="ECO:0007669"/>
    <property type="project" value="UniProtKB-UniRule"/>
</dbReference>
<dbReference type="CDD" id="cd04451">
    <property type="entry name" value="S1_IF1"/>
    <property type="match status" value="1"/>
</dbReference>
<dbReference type="FunFam" id="2.40.50.140:FF:000002">
    <property type="entry name" value="Translation initiation factor IF-1"/>
    <property type="match status" value="1"/>
</dbReference>
<dbReference type="Gene3D" id="2.40.50.140">
    <property type="entry name" value="Nucleic acid-binding proteins"/>
    <property type="match status" value="1"/>
</dbReference>
<dbReference type="HAMAP" id="MF_00075">
    <property type="entry name" value="IF_1"/>
    <property type="match status" value="1"/>
</dbReference>
<dbReference type="InterPro" id="IPR012340">
    <property type="entry name" value="NA-bd_OB-fold"/>
</dbReference>
<dbReference type="InterPro" id="IPR006196">
    <property type="entry name" value="RNA-binding_domain_S1_IF1"/>
</dbReference>
<dbReference type="InterPro" id="IPR003029">
    <property type="entry name" value="S1_domain"/>
</dbReference>
<dbReference type="InterPro" id="IPR004368">
    <property type="entry name" value="TIF_IF1"/>
</dbReference>
<dbReference type="NCBIfam" id="TIGR00008">
    <property type="entry name" value="infA"/>
    <property type="match status" value="1"/>
</dbReference>
<dbReference type="PANTHER" id="PTHR33370">
    <property type="entry name" value="TRANSLATION INITIATION FACTOR IF-1, CHLOROPLASTIC"/>
    <property type="match status" value="1"/>
</dbReference>
<dbReference type="PANTHER" id="PTHR33370:SF1">
    <property type="entry name" value="TRANSLATION INITIATION FACTOR IF-1, CHLOROPLASTIC"/>
    <property type="match status" value="1"/>
</dbReference>
<dbReference type="Pfam" id="PF01176">
    <property type="entry name" value="eIF-1a"/>
    <property type="match status" value="1"/>
</dbReference>
<dbReference type="SMART" id="SM00316">
    <property type="entry name" value="S1"/>
    <property type="match status" value="1"/>
</dbReference>
<dbReference type="SUPFAM" id="SSF50249">
    <property type="entry name" value="Nucleic acid-binding proteins"/>
    <property type="match status" value="1"/>
</dbReference>
<dbReference type="PROSITE" id="PS50832">
    <property type="entry name" value="S1_IF1_TYPE"/>
    <property type="match status" value="1"/>
</dbReference>
<gene>
    <name evidence="1" type="primary">infA</name>
</gene>
<feature type="chain" id="PRO_0000226954" description="Translation initiation factor IF-1, chloroplastic">
    <location>
        <begin position="1"/>
        <end position="77"/>
    </location>
</feature>
<feature type="domain" description="S1-like" evidence="1">
    <location>
        <begin position="1"/>
        <end position="72"/>
    </location>
</feature>
<organism>
    <name type="scientific">Zygnema circumcarinatum</name>
    <name type="common">Green alga</name>
    <dbReference type="NCBI Taxonomy" id="35869"/>
    <lineage>
        <taxon>Eukaryota</taxon>
        <taxon>Viridiplantae</taxon>
        <taxon>Streptophyta</taxon>
        <taxon>Zygnematophyceae</taxon>
        <taxon>Zygnematophycidae</taxon>
        <taxon>Zygnematales</taxon>
        <taxon>Zygnemataceae</taxon>
        <taxon>Zygnema</taxon>
    </lineage>
</organism>
<protein>
    <recommendedName>
        <fullName evidence="1">Translation initiation factor IF-1, chloroplastic</fullName>
    </recommendedName>
</protein>